<name>CH602_RHIJ3</name>
<sequence length="544" mass="57375">MSAKEIRFSTDARDRLLRGVELLNNAVKVTLGPKGRNVVIDKAYGAPRITKDGVSVAKEIELEDKFENMGAQMVREVASKTNDLAGDGTTTATVLAASIFREGAKLVAAGMNPMDLRRGIDLGVIAVVKEIKARAMKVKSSGEIAQVGTIAANGDATIGEMIARAMDKVGNEGVITVEEARTAETELDVVEGMQFDRGYLSPYFVTNAEKMRVELEEPYILVHEKKLGSLQALLPILEAVVQTGKPLLLISEDVEGEALATLVVNKLRGGLKVAAVKAPGFGDRRKAMLEDIAVLTAGQMISEDLGIKLENVTLDMLGHAKRVLIDKESTTIIDGSGEKAAIQARIQQIKAQIEDTTSDYDKEKLQERLAKLAGGVAVIRVGGATETEVKEKKDRIDDALNATRAAVEEGIVPGGGVALLRAKSALTGLTGENADVTAGISIVLRALEAPIRQIVDNAGFEGSIVVGKLAGSNDHNQGFDAQTETYVDMIEAGIVDPAKVVRTALQDAGSIAALLITAEVMIADIPAKDSAPAAGNGGMGAMGY</sequence>
<feature type="chain" id="PRO_0000256963" description="Chaperonin GroEL 2">
    <location>
        <begin position="1"/>
        <end position="544"/>
    </location>
</feature>
<feature type="binding site" evidence="1">
    <location>
        <begin position="30"/>
        <end position="33"/>
    </location>
    <ligand>
        <name>ATP</name>
        <dbReference type="ChEBI" id="CHEBI:30616"/>
    </ligand>
</feature>
<feature type="binding site" evidence="1">
    <location>
        <position position="51"/>
    </location>
    <ligand>
        <name>ATP</name>
        <dbReference type="ChEBI" id="CHEBI:30616"/>
    </ligand>
</feature>
<feature type="binding site" evidence="1">
    <location>
        <begin position="87"/>
        <end position="91"/>
    </location>
    <ligand>
        <name>ATP</name>
        <dbReference type="ChEBI" id="CHEBI:30616"/>
    </ligand>
</feature>
<feature type="binding site" evidence="1">
    <location>
        <position position="415"/>
    </location>
    <ligand>
        <name>ATP</name>
        <dbReference type="ChEBI" id="CHEBI:30616"/>
    </ligand>
</feature>
<feature type="binding site" evidence="1">
    <location>
        <position position="496"/>
    </location>
    <ligand>
        <name>ATP</name>
        <dbReference type="ChEBI" id="CHEBI:30616"/>
    </ligand>
</feature>
<accession>Q1MJF2</accession>
<comment type="function">
    <text evidence="1">Together with its co-chaperonin GroES, plays an essential role in assisting protein folding. The GroEL-GroES system forms a nano-cage that allows encapsulation of the non-native substrate proteins and provides a physical environment optimized to promote and accelerate protein folding.</text>
</comment>
<comment type="catalytic activity">
    <reaction evidence="1">
        <text>ATP + H2O + a folded polypeptide = ADP + phosphate + an unfolded polypeptide.</text>
        <dbReference type="EC" id="5.6.1.7"/>
    </reaction>
</comment>
<comment type="subunit">
    <text evidence="1">Forms a cylinder of 14 subunits composed of two heptameric rings stacked back-to-back. Interacts with the co-chaperonin GroES.</text>
</comment>
<comment type="subcellular location">
    <subcellularLocation>
        <location evidence="1">Cytoplasm</location>
    </subcellularLocation>
</comment>
<comment type="similarity">
    <text evidence="1">Belongs to the chaperonin (HSP60) family.</text>
</comment>
<proteinExistence type="inferred from homology"/>
<keyword id="KW-0067">ATP-binding</keyword>
<keyword id="KW-0143">Chaperone</keyword>
<keyword id="KW-0963">Cytoplasm</keyword>
<keyword id="KW-0413">Isomerase</keyword>
<keyword id="KW-0547">Nucleotide-binding</keyword>
<reference key="1">
    <citation type="journal article" date="2006" name="Genome Biol.">
        <title>The genome of Rhizobium leguminosarum has recognizable core and accessory components.</title>
        <authorList>
            <person name="Young J.P.W."/>
            <person name="Crossman L.C."/>
            <person name="Johnston A.W.B."/>
            <person name="Thomson N.R."/>
            <person name="Ghazoui Z.F."/>
            <person name="Hull K.H."/>
            <person name="Wexler M."/>
            <person name="Curson A.R.J."/>
            <person name="Todd J.D."/>
            <person name="Poole P.S."/>
            <person name="Mauchline T.H."/>
            <person name="East A.K."/>
            <person name="Quail M.A."/>
            <person name="Churcher C."/>
            <person name="Arrowsmith C."/>
            <person name="Cherevach I."/>
            <person name="Chillingworth T."/>
            <person name="Clarke K."/>
            <person name="Cronin A."/>
            <person name="Davis P."/>
            <person name="Fraser A."/>
            <person name="Hance Z."/>
            <person name="Hauser H."/>
            <person name="Jagels K."/>
            <person name="Moule S."/>
            <person name="Mungall K."/>
            <person name="Norbertczak H."/>
            <person name="Rabbinowitsch E."/>
            <person name="Sanders M."/>
            <person name="Simmonds M."/>
            <person name="Whitehead S."/>
            <person name="Parkhill J."/>
        </authorList>
    </citation>
    <scope>NUCLEOTIDE SEQUENCE [LARGE SCALE GENOMIC DNA]</scope>
    <source>
        <strain>DSM 114642 / LMG 32736 / 3841</strain>
    </source>
</reference>
<protein>
    <recommendedName>
        <fullName evidence="1">Chaperonin GroEL 2</fullName>
        <ecNumber evidence="1">5.6.1.7</ecNumber>
    </recommendedName>
    <alternativeName>
        <fullName evidence="1">60 kDa chaperonin 2</fullName>
    </alternativeName>
    <alternativeName>
        <fullName evidence="1">Chaperonin-60 2</fullName>
        <shortName evidence="1">Cpn60 2</shortName>
    </alternativeName>
</protein>
<organism>
    <name type="scientific">Rhizobium johnstonii (strain DSM 114642 / LMG 32736 / 3841)</name>
    <name type="common">Rhizobium leguminosarum bv. viciae</name>
    <dbReference type="NCBI Taxonomy" id="216596"/>
    <lineage>
        <taxon>Bacteria</taxon>
        <taxon>Pseudomonadati</taxon>
        <taxon>Pseudomonadota</taxon>
        <taxon>Alphaproteobacteria</taxon>
        <taxon>Hyphomicrobiales</taxon>
        <taxon>Rhizobiaceae</taxon>
        <taxon>Rhizobium/Agrobacterium group</taxon>
        <taxon>Rhizobium</taxon>
        <taxon>Rhizobium johnstonii</taxon>
    </lineage>
</organism>
<dbReference type="EC" id="5.6.1.7" evidence="1"/>
<dbReference type="EMBL" id="AM236080">
    <property type="protein sequence ID" value="CAK06908.1"/>
    <property type="molecule type" value="Genomic_DNA"/>
</dbReference>
<dbReference type="SMR" id="Q1MJF2"/>
<dbReference type="EnsemblBacteria" id="CAK06908">
    <property type="protein sequence ID" value="CAK06908"/>
    <property type="gene ID" value="RL1412"/>
</dbReference>
<dbReference type="KEGG" id="rle:RL1412"/>
<dbReference type="eggNOG" id="COG0459">
    <property type="taxonomic scope" value="Bacteria"/>
</dbReference>
<dbReference type="HOGENOM" id="CLU_016503_3_0_5"/>
<dbReference type="Proteomes" id="UP000006575">
    <property type="component" value="Chromosome"/>
</dbReference>
<dbReference type="GO" id="GO:0005737">
    <property type="term" value="C:cytoplasm"/>
    <property type="evidence" value="ECO:0007669"/>
    <property type="project" value="UniProtKB-SubCell"/>
</dbReference>
<dbReference type="GO" id="GO:0005524">
    <property type="term" value="F:ATP binding"/>
    <property type="evidence" value="ECO:0007669"/>
    <property type="project" value="UniProtKB-UniRule"/>
</dbReference>
<dbReference type="GO" id="GO:0140662">
    <property type="term" value="F:ATP-dependent protein folding chaperone"/>
    <property type="evidence" value="ECO:0007669"/>
    <property type="project" value="InterPro"/>
</dbReference>
<dbReference type="GO" id="GO:0016853">
    <property type="term" value="F:isomerase activity"/>
    <property type="evidence" value="ECO:0007669"/>
    <property type="project" value="UniProtKB-KW"/>
</dbReference>
<dbReference type="GO" id="GO:0051082">
    <property type="term" value="F:unfolded protein binding"/>
    <property type="evidence" value="ECO:0007669"/>
    <property type="project" value="UniProtKB-UniRule"/>
</dbReference>
<dbReference type="GO" id="GO:0042026">
    <property type="term" value="P:protein refolding"/>
    <property type="evidence" value="ECO:0007669"/>
    <property type="project" value="UniProtKB-UniRule"/>
</dbReference>
<dbReference type="CDD" id="cd03344">
    <property type="entry name" value="GroEL"/>
    <property type="match status" value="1"/>
</dbReference>
<dbReference type="FunFam" id="1.10.560.10:FF:000001">
    <property type="entry name" value="60 kDa chaperonin"/>
    <property type="match status" value="1"/>
</dbReference>
<dbReference type="FunFam" id="3.50.7.10:FF:000001">
    <property type="entry name" value="60 kDa chaperonin"/>
    <property type="match status" value="1"/>
</dbReference>
<dbReference type="Gene3D" id="3.50.7.10">
    <property type="entry name" value="GroEL"/>
    <property type="match status" value="1"/>
</dbReference>
<dbReference type="Gene3D" id="1.10.560.10">
    <property type="entry name" value="GroEL-like equatorial domain"/>
    <property type="match status" value="1"/>
</dbReference>
<dbReference type="Gene3D" id="3.30.260.10">
    <property type="entry name" value="TCP-1-like chaperonin intermediate domain"/>
    <property type="match status" value="1"/>
</dbReference>
<dbReference type="HAMAP" id="MF_00600">
    <property type="entry name" value="CH60"/>
    <property type="match status" value="1"/>
</dbReference>
<dbReference type="InterPro" id="IPR018370">
    <property type="entry name" value="Chaperonin_Cpn60_CS"/>
</dbReference>
<dbReference type="InterPro" id="IPR001844">
    <property type="entry name" value="Cpn60/GroEL"/>
</dbReference>
<dbReference type="InterPro" id="IPR002423">
    <property type="entry name" value="Cpn60/GroEL/TCP-1"/>
</dbReference>
<dbReference type="InterPro" id="IPR027409">
    <property type="entry name" value="GroEL-like_apical_dom_sf"/>
</dbReference>
<dbReference type="InterPro" id="IPR027413">
    <property type="entry name" value="GROEL-like_equatorial_sf"/>
</dbReference>
<dbReference type="InterPro" id="IPR027410">
    <property type="entry name" value="TCP-1-like_intermed_sf"/>
</dbReference>
<dbReference type="NCBIfam" id="TIGR02348">
    <property type="entry name" value="GroEL"/>
    <property type="match status" value="1"/>
</dbReference>
<dbReference type="NCBIfam" id="NF000592">
    <property type="entry name" value="PRK00013.1"/>
    <property type="match status" value="1"/>
</dbReference>
<dbReference type="NCBIfam" id="NF009487">
    <property type="entry name" value="PRK12849.1"/>
    <property type="match status" value="1"/>
</dbReference>
<dbReference type="NCBIfam" id="NF009488">
    <property type="entry name" value="PRK12850.1"/>
    <property type="match status" value="1"/>
</dbReference>
<dbReference type="NCBIfam" id="NF009489">
    <property type="entry name" value="PRK12851.1"/>
    <property type="match status" value="1"/>
</dbReference>
<dbReference type="PANTHER" id="PTHR45633">
    <property type="entry name" value="60 KDA HEAT SHOCK PROTEIN, MITOCHONDRIAL"/>
    <property type="match status" value="1"/>
</dbReference>
<dbReference type="Pfam" id="PF00118">
    <property type="entry name" value="Cpn60_TCP1"/>
    <property type="match status" value="1"/>
</dbReference>
<dbReference type="PRINTS" id="PR00298">
    <property type="entry name" value="CHAPERONIN60"/>
</dbReference>
<dbReference type="SUPFAM" id="SSF52029">
    <property type="entry name" value="GroEL apical domain-like"/>
    <property type="match status" value="1"/>
</dbReference>
<dbReference type="SUPFAM" id="SSF48592">
    <property type="entry name" value="GroEL equatorial domain-like"/>
    <property type="match status" value="1"/>
</dbReference>
<dbReference type="SUPFAM" id="SSF54849">
    <property type="entry name" value="GroEL-intermediate domain like"/>
    <property type="match status" value="1"/>
</dbReference>
<dbReference type="PROSITE" id="PS00296">
    <property type="entry name" value="CHAPERONINS_CPN60"/>
    <property type="match status" value="1"/>
</dbReference>
<gene>
    <name evidence="1" type="primary">groEL2</name>
    <name evidence="1" type="synonym">groL2</name>
    <name type="ordered locus">RL1412</name>
</gene>
<evidence type="ECO:0000255" key="1">
    <source>
        <dbReference type="HAMAP-Rule" id="MF_00600"/>
    </source>
</evidence>